<reference key="1">
    <citation type="journal article" date="2003" name="Proc. Natl. Acad. Sci. U.S.A.">
        <title>The complete genome sequence of the carcinogenic bacterium Helicobacter hepaticus.</title>
        <authorList>
            <person name="Suerbaum S."/>
            <person name="Josenhans C."/>
            <person name="Sterzenbach T."/>
            <person name="Drescher B."/>
            <person name="Brandt P."/>
            <person name="Bell M."/>
            <person name="Droege M."/>
            <person name="Fartmann B."/>
            <person name="Fischer H.-P."/>
            <person name="Ge Z."/>
            <person name="Hoerster A."/>
            <person name="Holland R."/>
            <person name="Klein K."/>
            <person name="Koenig J."/>
            <person name="Macko L."/>
            <person name="Mendz G.L."/>
            <person name="Nyakatura G."/>
            <person name="Schauer D.B."/>
            <person name="Shen Z."/>
            <person name="Weber J."/>
            <person name="Frosch M."/>
            <person name="Fox J.G."/>
        </authorList>
    </citation>
    <scope>NUCLEOTIDE SEQUENCE [LARGE SCALE GENOMIC DNA]</scope>
    <source>
        <strain>ATCC 51449 / 3B1</strain>
    </source>
</reference>
<organism>
    <name type="scientific">Helicobacter hepaticus (strain ATCC 51449 / 3B1)</name>
    <dbReference type="NCBI Taxonomy" id="235279"/>
    <lineage>
        <taxon>Bacteria</taxon>
        <taxon>Pseudomonadati</taxon>
        <taxon>Campylobacterota</taxon>
        <taxon>Epsilonproteobacteria</taxon>
        <taxon>Campylobacterales</taxon>
        <taxon>Helicobacteraceae</taxon>
        <taxon>Helicobacter</taxon>
    </lineage>
</organism>
<name>HIS6_HELHP</name>
<feature type="chain" id="PRO_0000142165" description="Imidazole glycerol phosphate synthase subunit HisF">
    <location>
        <begin position="1"/>
        <end position="251"/>
    </location>
</feature>
<feature type="active site" evidence="1">
    <location>
        <position position="12"/>
    </location>
</feature>
<feature type="active site" evidence="1">
    <location>
        <position position="131"/>
    </location>
</feature>
<protein>
    <recommendedName>
        <fullName evidence="1">Imidazole glycerol phosphate synthase subunit HisF</fullName>
        <ecNumber evidence="1">4.3.2.10</ecNumber>
    </recommendedName>
    <alternativeName>
        <fullName evidence="1">IGP synthase cyclase subunit</fullName>
    </alternativeName>
    <alternativeName>
        <fullName evidence="1">IGP synthase subunit HisF</fullName>
    </alternativeName>
    <alternativeName>
        <fullName evidence="1">ImGP synthase subunit HisF</fullName>
        <shortName evidence="1">IGPS subunit HisF</shortName>
    </alternativeName>
</protein>
<evidence type="ECO:0000255" key="1">
    <source>
        <dbReference type="HAMAP-Rule" id="MF_01013"/>
    </source>
</evidence>
<comment type="function">
    <text evidence="1">IGPS catalyzes the conversion of PRFAR and glutamine to IGP, AICAR and glutamate. The HisF subunit catalyzes the cyclization activity that produces IGP and AICAR from PRFAR using the ammonia provided by the HisH subunit.</text>
</comment>
<comment type="catalytic activity">
    <reaction evidence="1">
        <text>5-[(5-phospho-1-deoxy-D-ribulos-1-ylimino)methylamino]-1-(5-phospho-beta-D-ribosyl)imidazole-4-carboxamide + L-glutamine = D-erythro-1-(imidazol-4-yl)glycerol 3-phosphate + 5-amino-1-(5-phospho-beta-D-ribosyl)imidazole-4-carboxamide + L-glutamate + H(+)</text>
        <dbReference type="Rhea" id="RHEA:24793"/>
        <dbReference type="ChEBI" id="CHEBI:15378"/>
        <dbReference type="ChEBI" id="CHEBI:29985"/>
        <dbReference type="ChEBI" id="CHEBI:58278"/>
        <dbReference type="ChEBI" id="CHEBI:58359"/>
        <dbReference type="ChEBI" id="CHEBI:58475"/>
        <dbReference type="ChEBI" id="CHEBI:58525"/>
        <dbReference type="EC" id="4.3.2.10"/>
    </reaction>
</comment>
<comment type="pathway">
    <text evidence="1">Amino-acid biosynthesis; L-histidine biosynthesis; L-histidine from 5-phospho-alpha-D-ribose 1-diphosphate: step 5/9.</text>
</comment>
<comment type="subunit">
    <text evidence="1">Heterodimer of HisH and HisF.</text>
</comment>
<comment type="subcellular location">
    <subcellularLocation>
        <location evidence="1">Cytoplasm</location>
    </subcellularLocation>
</comment>
<comment type="similarity">
    <text evidence="1">Belongs to the HisA/HisF family.</text>
</comment>
<gene>
    <name evidence="1" type="primary">hisF</name>
    <name type="ordered locus">HH_1176</name>
</gene>
<keyword id="KW-0028">Amino-acid biosynthesis</keyword>
<keyword id="KW-0963">Cytoplasm</keyword>
<keyword id="KW-0368">Histidine biosynthesis</keyword>
<keyword id="KW-0456">Lyase</keyword>
<keyword id="KW-1185">Reference proteome</keyword>
<proteinExistence type="inferred from homology"/>
<sequence length="251" mass="26953">MSLAKRIIPCLDINGGRVVKGVNFIGLQDAGDPVEIARRYNDEGADEIVLLDITASYEQRGIMIEVVKNIAKEVFIPFSVGGGIRSLEDMSALLNAGCDKISINSAAIRNPQLIDESAKRFGSQCIVVAVDVKKVSQNSWNVYINGGRVDSGKDMLEWINEACARGAGEILLTSIDTDGTKGGYDKAMIEAVKSINVPIIASGGAGSMEDFADVFVHGADAALAASVFHYKEIEIKMLKTYLQDKGVPVRI</sequence>
<dbReference type="EC" id="4.3.2.10" evidence="1"/>
<dbReference type="EMBL" id="AE017125">
    <property type="protein sequence ID" value="AAP77773.1"/>
    <property type="molecule type" value="Genomic_DNA"/>
</dbReference>
<dbReference type="RefSeq" id="WP_011116016.1">
    <property type="nucleotide sequence ID" value="NC_004917.1"/>
</dbReference>
<dbReference type="SMR" id="Q7VGZ1"/>
<dbReference type="STRING" id="235279.HH_1176"/>
<dbReference type="KEGG" id="hhe:HH_1176"/>
<dbReference type="eggNOG" id="COG0107">
    <property type="taxonomic scope" value="Bacteria"/>
</dbReference>
<dbReference type="HOGENOM" id="CLU_048577_4_0_7"/>
<dbReference type="OrthoDB" id="9807749at2"/>
<dbReference type="UniPathway" id="UPA00031">
    <property type="reaction ID" value="UER00010"/>
</dbReference>
<dbReference type="Proteomes" id="UP000002495">
    <property type="component" value="Chromosome"/>
</dbReference>
<dbReference type="GO" id="GO:0005737">
    <property type="term" value="C:cytoplasm"/>
    <property type="evidence" value="ECO:0007669"/>
    <property type="project" value="UniProtKB-SubCell"/>
</dbReference>
<dbReference type="GO" id="GO:0000107">
    <property type="term" value="F:imidazoleglycerol-phosphate synthase activity"/>
    <property type="evidence" value="ECO:0007669"/>
    <property type="project" value="UniProtKB-UniRule"/>
</dbReference>
<dbReference type="GO" id="GO:0016829">
    <property type="term" value="F:lyase activity"/>
    <property type="evidence" value="ECO:0007669"/>
    <property type="project" value="UniProtKB-KW"/>
</dbReference>
<dbReference type="GO" id="GO:0000105">
    <property type="term" value="P:L-histidine biosynthetic process"/>
    <property type="evidence" value="ECO:0007669"/>
    <property type="project" value="UniProtKB-UniRule"/>
</dbReference>
<dbReference type="CDD" id="cd04731">
    <property type="entry name" value="HisF"/>
    <property type="match status" value="1"/>
</dbReference>
<dbReference type="FunFam" id="3.20.20.70:FF:000006">
    <property type="entry name" value="Imidazole glycerol phosphate synthase subunit HisF"/>
    <property type="match status" value="1"/>
</dbReference>
<dbReference type="Gene3D" id="3.20.20.70">
    <property type="entry name" value="Aldolase class I"/>
    <property type="match status" value="1"/>
</dbReference>
<dbReference type="HAMAP" id="MF_01013">
    <property type="entry name" value="HisF"/>
    <property type="match status" value="1"/>
</dbReference>
<dbReference type="InterPro" id="IPR013785">
    <property type="entry name" value="Aldolase_TIM"/>
</dbReference>
<dbReference type="InterPro" id="IPR006062">
    <property type="entry name" value="His_biosynth"/>
</dbReference>
<dbReference type="InterPro" id="IPR004651">
    <property type="entry name" value="HisF"/>
</dbReference>
<dbReference type="InterPro" id="IPR050064">
    <property type="entry name" value="IGPS_HisA/HisF"/>
</dbReference>
<dbReference type="InterPro" id="IPR011060">
    <property type="entry name" value="RibuloseP-bd_barrel"/>
</dbReference>
<dbReference type="NCBIfam" id="TIGR00735">
    <property type="entry name" value="hisF"/>
    <property type="match status" value="1"/>
</dbReference>
<dbReference type="PANTHER" id="PTHR21235:SF2">
    <property type="entry name" value="IMIDAZOLE GLYCEROL PHOSPHATE SYNTHASE HISHF"/>
    <property type="match status" value="1"/>
</dbReference>
<dbReference type="PANTHER" id="PTHR21235">
    <property type="entry name" value="IMIDAZOLE GLYCEROL PHOSPHATE SYNTHASE SUBUNIT HISF/H IGP SYNTHASE SUBUNIT HISF/H"/>
    <property type="match status" value="1"/>
</dbReference>
<dbReference type="Pfam" id="PF00977">
    <property type="entry name" value="His_biosynth"/>
    <property type="match status" value="1"/>
</dbReference>
<dbReference type="SUPFAM" id="SSF51366">
    <property type="entry name" value="Ribulose-phoshate binding barrel"/>
    <property type="match status" value="1"/>
</dbReference>
<accession>Q7VGZ1</accession>